<protein>
    <recommendedName>
        <fullName evidence="1">Type III pantothenate kinase</fullName>
        <ecNumber evidence="1">2.7.1.33</ecNumber>
    </recommendedName>
    <alternativeName>
        <fullName evidence="1">PanK-III</fullName>
    </alternativeName>
    <alternativeName>
        <fullName evidence="1">Pantothenic acid kinase</fullName>
    </alternativeName>
</protein>
<proteinExistence type="inferred from homology"/>
<sequence>MLWLDLGNTRLKYWLTDDIGQIVSHDAKQHLQAPAELLMGLTDRFERYAPDFIGISSVLGDDLNIKVSETLSRLNIPFEFVHVDANYPLMKSAYNDEQLGCDRWLQMLGAVDKTKRQCLIGCGTAITIDLIDHATHLGGYIFPSIYLQRESLFSGTKQITISNGTFDSVSQGITTQDAVHRGILLSIVGAINEISTRHPNFEVIMTGGDAAIIAQHVNRPVRLRDDLLLNGLARYFDHSKQS</sequence>
<organism>
    <name type="scientific">Psychrobacter arcticus (strain DSM 17307 / VKM B-2377 / 273-4)</name>
    <dbReference type="NCBI Taxonomy" id="259536"/>
    <lineage>
        <taxon>Bacteria</taxon>
        <taxon>Pseudomonadati</taxon>
        <taxon>Pseudomonadota</taxon>
        <taxon>Gammaproteobacteria</taxon>
        <taxon>Moraxellales</taxon>
        <taxon>Moraxellaceae</taxon>
        <taxon>Psychrobacter</taxon>
    </lineage>
</organism>
<dbReference type="EC" id="2.7.1.33" evidence="1"/>
<dbReference type="EMBL" id="CP000082">
    <property type="protein sequence ID" value="AAZ18184.1"/>
    <property type="molecule type" value="Genomic_DNA"/>
</dbReference>
<dbReference type="RefSeq" id="WP_011279622.1">
    <property type="nucleotide sequence ID" value="NC_007204.1"/>
</dbReference>
<dbReference type="SMR" id="Q4FUX4"/>
<dbReference type="STRING" id="259536.Psyc_0314"/>
<dbReference type="KEGG" id="par:Psyc_0314"/>
<dbReference type="eggNOG" id="COG1521">
    <property type="taxonomic scope" value="Bacteria"/>
</dbReference>
<dbReference type="HOGENOM" id="CLU_066627_0_1_6"/>
<dbReference type="OrthoDB" id="9781305at2"/>
<dbReference type="UniPathway" id="UPA00241">
    <property type="reaction ID" value="UER00352"/>
</dbReference>
<dbReference type="Proteomes" id="UP000000546">
    <property type="component" value="Chromosome"/>
</dbReference>
<dbReference type="GO" id="GO:0005737">
    <property type="term" value="C:cytoplasm"/>
    <property type="evidence" value="ECO:0007669"/>
    <property type="project" value="UniProtKB-SubCell"/>
</dbReference>
<dbReference type="GO" id="GO:0005524">
    <property type="term" value="F:ATP binding"/>
    <property type="evidence" value="ECO:0007669"/>
    <property type="project" value="UniProtKB-UniRule"/>
</dbReference>
<dbReference type="GO" id="GO:0004594">
    <property type="term" value="F:pantothenate kinase activity"/>
    <property type="evidence" value="ECO:0007669"/>
    <property type="project" value="UniProtKB-UniRule"/>
</dbReference>
<dbReference type="GO" id="GO:0015937">
    <property type="term" value="P:coenzyme A biosynthetic process"/>
    <property type="evidence" value="ECO:0007669"/>
    <property type="project" value="UniProtKB-UniRule"/>
</dbReference>
<dbReference type="CDD" id="cd24015">
    <property type="entry name" value="ASKHA_NBD_PanK-III"/>
    <property type="match status" value="1"/>
</dbReference>
<dbReference type="Gene3D" id="3.30.420.40">
    <property type="match status" value="2"/>
</dbReference>
<dbReference type="HAMAP" id="MF_01274">
    <property type="entry name" value="Pantothen_kinase_3"/>
    <property type="match status" value="1"/>
</dbReference>
<dbReference type="InterPro" id="IPR043129">
    <property type="entry name" value="ATPase_NBD"/>
</dbReference>
<dbReference type="InterPro" id="IPR004619">
    <property type="entry name" value="Type_III_PanK"/>
</dbReference>
<dbReference type="NCBIfam" id="TIGR00671">
    <property type="entry name" value="baf"/>
    <property type="match status" value="1"/>
</dbReference>
<dbReference type="NCBIfam" id="NF009858">
    <property type="entry name" value="PRK13322.1-3"/>
    <property type="match status" value="1"/>
</dbReference>
<dbReference type="PANTHER" id="PTHR34265">
    <property type="entry name" value="TYPE III PANTOTHENATE KINASE"/>
    <property type="match status" value="1"/>
</dbReference>
<dbReference type="PANTHER" id="PTHR34265:SF1">
    <property type="entry name" value="TYPE III PANTOTHENATE KINASE"/>
    <property type="match status" value="1"/>
</dbReference>
<dbReference type="Pfam" id="PF03309">
    <property type="entry name" value="Pan_kinase"/>
    <property type="match status" value="1"/>
</dbReference>
<dbReference type="SUPFAM" id="SSF53067">
    <property type="entry name" value="Actin-like ATPase domain"/>
    <property type="match status" value="2"/>
</dbReference>
<keyword id="KW-0067">ATP-binding</keyword>
<keyword id="KW-0173">Coenzyme A biosynthesis</keyword>
<keyword id="KW-0963">Cytoplasm</keyword>
<keyword id="KW-0418">Kinase</keyword>
<keyword id="KW-0547">Nucleotide-binding</keyword>
<keyword id="KW-0630">Potassium</keyword>
<keyword id="KW-1185">Reference proteome</keyword>
<keyword id="KW-0808">Transferase</keyword>
<feature type="chain" id="PRO_0000270892" description="Type III pantothenate kinase">
    <location>
        <begin position="1"/>
        <end position="242"/>
    </location>
</feature>
<feature type="active site" description="Proton acceptor" evidence="1">
    <location>
        <position position="102"/>
    </location>
</feature>
<feature type="binding site" evidence="1">
    <location>
        <begin position="5"/>
        <end position="12"/>
    </location>
    <ligand>
        <name>ATP</name>
        <dbReference type="ChEBI" id="CHEBI:30616"/>
    </ligand>
</feature>
<feature type="binding site" evidence="1">
    <location>
        <position position="94"/>
    </location>
    <ligand>
        <name>substrate</name>
    </ligand>
</feature>
<feature type="binding site" evidence="1">
    <location>
        <begin position="100"/>
        <end position="103"/>
    </location>
    <ligand>
        <name>substrate</name>
    </ligand>
</feature>
<feature type="binding site" evidence="1">
    <location>
        <position position="124"/>
    </location>
    <ligand>
        <name>ATP</name>
        <dbReference type="ChEBI" id="CHEBI:30616"/>
    </ligand>
</feature>
<feature type="binding site" evidence="1">
    <location>
        <position position="175"/>
    </location>
    <ligand>
        <name>substrate</name>
    </ligand>
</feature>
<gene>
    <name evidence="1" type="primary">coaX</name>
    <name type="ordered locus">Psyc_0314</name>
</gene>
<evidence type="ECO:0000255" key="1">
    <source>
        <dbReference type="HAMAP-Rule" id="MF_01274"/>
    </source>
</evidence>
<name>COAX_PSYA2</name>
<accession>Q4FUX4</accession>
<reference key="1">
    <citation type="journal article" date="2010" name="Appl. Environ. Microbiol.">
        <title>The genome sequence of Psychrobacter arcticus 273-4, a psychroactive Siberian permafrost bacterium, reveals mechanisms for adaptation to low-temperature growth.</title>
        <authorList>
            <person name="Ayala-del-Rio H.L."/>
            <person name="Chain P.S."/>
            <person name="Grzymski J.J."/>
            <person name="Ponder M.A."/>
            <person name="Ivanova N."/>
            <person name="Bergholz P.W."/>
            <person name="Di Bartolo G."/>
            <person name="Hauser L."/>
            <person name="Land M."/>
            <person name="Bakermans C."/>
            <person name="Rodrigues D."/>
            <person name="Klappenbach J."/>
            <person name="Zarka D."/>
            <person name="Larimer F."/>
            <person name="Richardson P."/>
            <person name="Murray A."/>
            <person name="Thomashow M."/>
            <person name="Tiedje J.M."/>
        </authorList>
    </citation>
    <scope>NUCLEOTIDE SEQUENCE [LARGE SCALE GENOMIC DNA]</scope>
    <source>
        <strain>DSM 17307 / VKM B-2377 / 273-4</strain>
    </source>
</reference>
<comment type="function">
    <text evidence="1">Catalyzes the phosphorylation of pantothenate (Pan), the first step in CoA biosynthesis.</text>
</comment>
<comment type="catalytic activity">
    <reaction evidence="1">
        <text>(R)-pantothenate + ATP = (R)-4'-phosphopantothenate + ADP + H(+)</text>
        <dbReference type="Rhea" id="RHEA:16373"/>
        <dbReference type="ChEBI" id="CHEBI:10986"/>
        <dbReference type="ChEBI" id="CHEBI:15378"/>
        <dbReference type="ChEBI" id="CHEBI:29032"/>
        <dbReference type="ChEBI" id="CHEBI:30616"/>
        <dbReference type="ChEBI" id="CHEBI:456216"/>
        <dbReference type="EC" id="2.7.1.33"/>
    </reaction>
</comment>
<comment type="cofactor">
    <cofactor evidence="1">
        <name>NH4(+)</name>
        <dbReference type="ChEBI" id="CHEBI:28938"/>
    </cofactor>
    <cofactor evidence="1">
        <name>K(+)</name>
        <dbReference type="ChEBI" id="CHEBI:29103"/>
    </cofactor>
    <text evidence="1">A monovalent cation. Ammonium or potassium.</text>
</comment>
<comment type="pathway">
    <text evidence="1">Cofactor biosynthesis; coenzyme A biosynthesis; CoA from (R)-pantothenate: step 1/5.</text>
</comment>
<comment type="subunit">
    <text evidence="1">Homodimer.</text>
</comment>
<comment type="subcellular location">
    <subcellularLocation>
        <location evidence="1">Cytoplasm</location>
    </subcellularLocation>
</comment>
<comment type="similarity">
    <text evidence="1">Belongs to the type III pantothenate kinase family.</text>
</comment>